<comment type="function">
    <text evidence="1">RNaseP catalyzes the removal of the 5'-leader sequence from pre-tRNA to produce the mature 5'-terminus. It can also cleave other RNA substrates such as 4.5S RNA. The protein component plays an auxiliary but essential role in vivo by binding to the 5'-leader sequence and broadening the substrate specificity of the ribozyme.</text>
</comment>
<comment type="catalytic activity">
    <reaction evidence="1">
        <text>Endonucleolytic cleavage of RNA, removing 5'-extranucleotides from tRNA precursor.</text>
        <dbReference type="EC" id="3.1.26.5"/>
    </reaction>
</comment>
<comment type="subunit">
    <text evidence="1">Consists of a catalytic RNA component (M1 or rnpB) and a protein subunit.</text>
</comment>
<comment type="similarity">
    <text evidence="1">Belongs to the RnpA family.</text>
</comment>
<accession>Q98R57</accession>
<sequence length="111" mass="13649">MKKIYHIRKNWEFQAIINSKRQVISKNLIFYYQRNNTFKIGVSIPKKFAGAVKRNFYKRQIMAILRDIQDLTNLEYKIVMIVRKNFMALDFLEKKKEIQKMLERFKNEKRK</sequence>
<evidence type="ECO:0000255" key="1">
    <source>
        <dbReference type="HAMAP-Rule" id="MF_00227"/>
    </source>
</evidence>
<gene>
    <name evidence="1" type="primary">rnpA</name>
    <name type="ordered locus">MYPU_1530</name>
</gene>
<protein>
    <recommendedName>
        <fullName evidence="1">Ribonuclease P protein component</fullName>
        <shortName evidence="1">RNase P protein</shortName>
        <shortName evidence="1">RNaseP protein</shortName>
        <ecNumber evidence="1">3.1.26.5</ecNumber>
    </recommendedName>
    <alternativeName>
        <fullName evidence="1">Protein C5</fullName>
    </alternativeName>
</protein>
<proteinExistence type="inferred from homology"/>
<name>RNPA_MYCPU</name>
<organism>
    <name type="scientific">Mycoplasmopsis pulmonis (strain UAB CTIP)</name>
    <name type="common">Mycoplasma pulmonis</name>
    <dbReference type="NCBI Taxonomy" id="272635"/>
    <lineage>
        <taxon>Bacteria</taxon>
        <taxon>Bacillati</taxon>
        <taxon>Mycoplasmatota</taxon>
        <taxon>Mycoplasmoidales</taxon>
        <taxon>Metamycoplasmataceae</taxon>
        <taxon>Mycoplasmopsis</taxon>
    </lineage>
</organism>
<dbReference type="EC" id="3.1.26.5" evidence="1"/>
<dbReference type="EMBL" id="AL445563">
    <property type="protein sequence ID" value="CAC13326.1"/>
    <property type="molecule type" value="Genomic_DNA"/>
</dbReference>
<dbReference type="PIR" id="A90531">
    <property type="entry name" value="A90531"/>
</dbReference>
<dbReference type="RefSeq" id="WP_010924957.1">
    <property type="nucleotide sequence ID" value="NC_002771.1"/>
</dbReference>
<dbReference type="SMR" id="Q98R57"/>
<dbReference type="STRING" id="272635.gene:17576737"/>
<dbReference type="KEGG" id="mpu:MYPU_1530"/>
<dbReference type="eggNOG" id="COG0594">
    <property type="taxonomic scope" value="Bacteria"/>
</dbReference>
<dbReference type="HOGENOM" id="CLU_117179_9_1_14"/>
<dbReference type="BioCyc" id="MPUL272635:G1GT6-154-MONOMER"/>
<dbReference type="BRENDA" id="3.1.26.5">
    <property type="organism ID" value="6912"/>
</dbReference>
<dbReference type="Proteomes" id="UP000000528">
    <property type="component" value="Chromosome"/>
</dbReference>
<dbReference type="GO" id="GO:0030677">
    <property type="term" value="C:ribonuclease P complex"/>
    <property type="evidence" value="ECO:0007669"/>
    <property type="project" value="TreeGrafter"/>
</dbReference>
<dbReference type="GO" id="GO:0042781">
    <property type="term" value="F:3'-tRNA processing endoribonuclease activity"/>
    <property type="evidence" value="ECO:0007669"/>
    <property type="project" value="TreeGrafter"/>
</dbReference>
<dbReference type="GO" id="GO:0004526">
    <property type="term" value="F:ribonuclease P activity"/>
    <property type="evidence" value="ECO:0007669"/>
    <property type="project" value="UniProtKB-UniRule"/>
</dbReference>
<dbReference type="GO" id="GO:0000049">
    <property type="term" value="F:tRNA binding"/>
    <property type="evidence" value="ECO:0007669"/>
    <property type="project" value="UniProtKB-UniRule"/>
</dbReference>
<dbReference type="GO" id="GO:0001682">
    <property type="term" value="P:tRNA 5'-leader removal"/>
    <property type="evidence" value="ECO:0007669"/>
    <property type="project" value="UniProtKB-UniRule"/>
</dbReference>
<dbReference type="Gene3D" id="3.30.230.10">
    <property type="match status" value="1"/>
</dbReference>
<dbReference type="HAMAP" id="MF_00227">
    <property type="entry name" value="RNase_P"/>
    <property type="match status" value="1"/>
</dbReference>
<dbReference type="InterPro" id="IPR020568">
    <property type="entry name" value="Ribosomal_Su5_D2-typ_SF"/>
</dbReference>
<dbReference type="InterPro" id="IPR014721">
    <property type="entry name" value="Ribsml_uS5_D2-typ_fold_subgr"/>
</dbReference>
<dbReference type="InterPro" id="IPR000100">
    <property type="entry name" value="RNase_P"/>
</dbReference>
<dbReference type="NCBIfam" id="TIGR00188">
    <property type="entry name" value="rnpA"/>
    <property type="match status" value="1"/>
</dbReference>
<dbReference type="PANTHER" id="PTHR33992">
    <property type="entry name" value="RIBONUCLEASE P PROTEIN COMPONENT"/>
    <property type="match status" value="1"/>
</dbReference>
<dbReference type="PANTHER" id="PTHR33992:SF1">
    <property type="entry name" value="RIBONUCLEASE P PROTEIN COMPONENT"/>
    <property type="match status" value="1"/>
</dbReference>
<dbReference type="Pfam" id="PF00825">
    <property type="entry name" value="Ribonuclease_P"/>
    <property type="match status" value="1"/>
</dbReference>
<dbReference type="SUPFAM" id="SSF54211">
    <property type="entry name" value="Ribosomal protein S5 domain 2-like"/>
    <property type="match status" value="1"/>
</dbReference>
<reference key="1">
    <citation type="journal article" date="2001" name="Nucleic Acids Res.">
        <title>The complete genome sequence of the murine respiratory pathogen Mycoplasma pulmonis.</title>
        <authorList>
            <person name="Chambaud I."/>
            <person name="Heilig R."/>
            <person name="Ferris S."/>
            <person name="Barbe V."/>
            <person name="Samson D."/>
            <person name="Galisson F."/>
            <person name="Moszer I."/>
            <person name="Dybvig K."/>
            <person name="Wroblewski H."/>
            <person name="Viari A."/>
            <person name="Rocha E.P.C."/>
            <person name="Blanchard A."/>
        </authorList>
    </citation>
    <scope>NUCLEOTIDE SEQUENCE [LARGE SCALE GENOMIC DNA]</scope>
    <source>
        <strain>UAB CTIP</strain>
    </source>
</reference>
<keyword id="KW-0255">Endonuclease</keyword>
<keyword id="KW-0378">Hydrolase</keyword>
<keyword id="KW-0540">Nuclease</keyword>
<keyword id="KW-1185">Reference proteome</keyword>
<keyword id="KW-0694">RNA-binding</keyword>
<keyword id="KW-0819">tRNA processing</keyword>
<feature type="chain" id="PRO_0000198493" description="Ribonuclease P protein component">
    <location>
        <begin position="1"/>
        <end position="111"/>
    </location>
</feature>